<proteinExistence type="inferred from homology"/>
<comment type="function">
    <text evidence="1">Involved in the regulation of virulence genes. Acts as a repressor of the agr locus and consequently targets genes regulated by the agr system such as sspA, hla and hlb. Binds directly to the agr promoter region (By similarity).</text>
</comment>
<comment type="subcellular location">
    <subcellularLocation>
        <location evidence="1">Cytoplasm</location>
    </subcellularLocation>
</comment>
<comment type="similarity">
    <text evidence="3">Belongs to the SarA family.</text>
</comment>
<comment type="sequence caution" evidence="3">
    <conflict type="erroneous initiation">
        <sequence resource="EMBL-CDS" id="BAB56830"/>
    </conflict>
</comment>
<protein>
    <recommendedName>
        <fullName>HTH-type transcriptional regulator SarX</fullName>
    </recommendedName>
    <alternativeName>
        <fullName>Staphylococcal accessory regulator X</fullName>
    </alternativeName>
</protein>
<name>SARX_STAAM</name>
<gene>
    <name type="primary">sarX</name>
    <name type="ordered locus">SAV0668</name>
</gene>
<organism>
    <name type="scientific">Staphylococcus aureus (strain Mu50 / ATCC 700699)</name>
    <dbReference type="NCBI Taxonomy" id="158878"/>
    <lineage>
        <taxon>Bacteria</taxon>
        <taxon>Bacillati</taxon>
        <taxon>Bacillota</taxon>
        <taxon>Bacilli</taxon>
        <taxon>Bacillales</taxon>
        <taxon>Staphylococcaceae</taxon>
        <taxon>Staphylococcus</taxon>
    </lineage>
</organism>
<dbReference type="EMBL" id="BA000017">
    <property type="protein sequence ID" value="BAB56830.1"/>
    <property type="status" value="ALT_INIT"/>
    <property type="molecule type" value="Genomic_DNA"/>
</dbReference>
<dbReference type="RefSeq" id="WP_001090985.1">
    <property type="nucleotide sequence ID" value="NC_002758.2"/>
</dbReference>
<dbReference type="SMR" id="Q99VV3"/>
<dbReference type="KEGG" id="sav:SAV0668"/>
<dbReference type="HOGENOM" id="CLU_166896_0_0_9"/>
<dbReference type="Proteomes" id="UP000002481">
    <property type="component" value="Chromosome"/>
</dbReference>
<dbReference type="GO" id="GO:0005737">
    <property type="term" value="C:cytoplasm"/>
    <property type="evidence" value="ECO:0007669"/>
    <property type="project" value="UniProtKB-SubCell"/>
</dbReference>
<dbReference type="GO" id="GO:0003677">
    <property type="term" value="F:DNA binding"/>
    <property type="evidence" value="ECO:0007669"/>
    <property type="project" value="UniProtKB-KW"/>
</dbReference>
<dbReference type="GO" id="GO:0006355">
    <property type="term" value="P:regulation of DNA-templated transcription"/>
    <property type="evidence" value="ECO:0007669"/>
    <property type="project" value="InterPro"/>
</dbReference>
<dbReference type="Gene3D" id="1.10.10.10">
    <property type="entry name" value="Winged helix-like DNA-binding domain superfamily/Winged helix DNA-binding domain"/>
    <property type="match status" value="1"/>
</dbReference>
<dbReference type="InterPro" id="IPR010166">
    <property type="entry name" value="SarA/Rot_dom"/>
</dbReference>
<dbReference type="InterPro" id="IPR055166">
    <property type="entry name" value="Transc_reg_Sar_Rot_HTH"/>
</dbReference>
<dbReference type="InterPro" id="IPR036388">
    <property type="entry name" value="WH-like_DNA-bd_sf"/>
</dbReference>
<dbReference type="InterPro" id="IPR036390">
    <property type="entry name" value="WH_DNA-bd_sf"/>
</dbReference>
<dbReference type="NCBIfam" id="TIGR01889">
    <property type="entry name" value="Staph_reg_Sar"/>
    <property type="match status" value="1"/>
</dbReference>
<dbReference type="Pfam" id="PF22381">
    <property type="entry name" value="Staph_reg_Sar_Rot"/>
    <property type="match status" value="1"/>
</dbReference>
<dbReference type="SUPFAM" id="SSF46785">
    <property type="entry name" value="Winged helix' DNA-binding domain"/>
    <property type="match status" value="1"/>
</dbReference>
<accession>Q99VV3</accession>
<feature type="chain" id="PRO_0000259140" description="HTH-type transcriptional regulator SarX">
    <location>
        <begin position="1"/>
        <end position="119"/>
    </location>
</feature>
<feature type="DNA-binding region" description="H-T-H motif" evidence="2">
    <location>
        <begin position="55"/>
        <end position="78"/>
    </location>
</feature>
<keyword id="KW-0963">Cytoplasm</keyword>
<keyword id="KW-0238">DNA-binding</keyword>
<keyword id="KW-0678">Repressor</keyword>
<keyword id="KW-0804">Transcription</keyword>
<keyword id="KW-0805">Transcription regulation</keyword>
<keyword id="KW-0843">Virulence</keyword>
<evidence type="ECO:0000250" key="1"/>
<evidence type="ECO:0000255" key="2"/>
<evidence type="ECO:0000305" key="3"/>
<sequence length="119" mass="14179">MNTEKLETLLGFYKQYKALSEYIDKKYKLSLNDLAVLDLTMKHCKDEKVLMQSFLKTAMDELDLSRTKLLVSIRRLIEKERLSKVRSSKDERKIYIYLNNDDISKFNALFEDVEQFLNI</sequence>
<reference key="1">
    <citation type="journal article" date="2001" name="Lancet">
        <title>Whole genome sequencing of meticillin-resistant Staphylococcus aureus.</title>
        <authorList>
            <person name="Kuroda M."/>
            <person name="Ohta T."/>
            <person name="Uchiyama I."/>
            <person name="Baba T."/>
            <person name="Yuzawa H."/>
            <person name="Kobayashi I."/>
            <person name="Cui L."/>
            <person name="Oguchi A."/>
            <person name="Aoki K."/>
            <person name="Nagai Y."/>
            <person name="Lian J.-Q."/>
            <person name="Ito T."/>
            <person name="Kanamori M."/>
            <person name="Matsumaru H."/>
            <person name="Maruyama A."/>
            <person name="Murakami H."/>
            <person name="Hosoyama A."/>
            <person name="Mizutani-Ui Y."/>
            <person name="Takahashi N.K."/>
            <person name="Sawano T."/>
            <person name="Inoue R."/>
            <person name="Kaito C."/>
            <person name="Sekimizu K."/>
            <person name="Hirakawa H."/>
            <person name="Kuhara S."/>
            <person name="Goto S."/>
            <person name="Yabuzaki J."/>
            <person name="Kanehisa M."/>
            <person name="Yamashita A."/>
            <person name="Oshima K."/>
            <person name="Furuya K."/>
            <person name="Yoshino C."/>
            <person name="Shiba T."/>
            <person name="Hattori M."/>
            <person name="Ogasawara N."/>
            <person name="Hayashi H."/>
            <person name="Hiramatsu K."/>
        </authorList>
    </citation>
    <scope>NUCLEOTIDE SEQUENCE [LARGE SCALE GENOMIC DNA]</scope>
    <source>
        <strain>Mu50 / ATCC 700699</strain>
    </source>
</reference>